<proteinExistence type="evidence at protein level"/>
<gene>
    <name evidence="9" type="primary">Kmo</name>
</gene>
<organism>
    <name type="scientific">Mus musculus</name>
    <name type="common">Mouse</name>
    <dbReference type="NCBI Taxonomy" id="10090"/>
    <lineage>
        <taxon>Eukaryota</taxon>
        <taxon>Metazoa</taxon>
        <taxon>Chordata</taxon>
        <taxon>Craniata</taxon>
        <taxon>Vertebrata</taxon>
        <taxon>Euteleostomi</taxon>
        <taxon>Mammalia</taxon>
        <taxon>Eutheria</taxon>
        <taxon>Euarchontoglires</taxon>
        <taxon>Glires</taxon>
        <taxon>Rodentia</taxon>
        <taxon>Myomorpha</taxon>
        <taxon>Muroidea</taxon>
        <taxon>Muridae</taxon>
        <taxon>Murinae</taxon>
        <taxon>Mus</taxon>
        <taxon>Mus</taxon>
    </lineage>
</organism>
<evidence type="ECO:0000250" key="1">
    <source>
        <dbReference type="UniProtKB" id="O15229"/>
    </source>
</evidence>
<evidence type="ECO:0000250" key="2">
    <source>
        <dbReference type="UniProtKB" id="Q84HF5"/>
    </source>
</evidence>
<evidence type="ECO:0000255" key="3">
    <source>
        <dbReference type="HAMAP-Rule" id="MF_03018"/>
    </source>
</evidence>
<evidence type="ECO:0000269" key="4">
    <source>
    </source>
</evidence>
<evidence type="ECO:0000269" key="5">
    <source>
    </source>
</evidence>
<evidence type="ECO:0000269" key="6">
    <source>
    </source>
</evidence>
<evidence type="ECO:0000303" key="7">
    <source>
    </source>
</evidence>
<evidence type="ECO:0000305" key="8"/>
<evidence type="ECO:0000312" key="9">
    <source>
        <dbReference type="EMBL" id="AAH14683.1"/>
    </source>
</evidence>
<reference evidence="8" key="1">
    <citation type="journal article" date="2005" name="Science">
        <title>The transcriptional landscape of the mammalian genome.</title>
        <authorList>
            <person name="Carninci P."/>
            <person name="Kasukawa T."/>
            <person name="Katayama S."/>
            <person name="Gough J."/>
            <person name="Frith M.C."/>
            <person name="Maeda N."/>
            <person name="Oyama R."/>
            <person name="Ravasi T."/>
            <person name="Lenhard B."/>
            <person name="Wells C."/>
            <person name="Kodzius R."/>
            <person name="Shimokawa K."/>
            <person name="Bajic V.B."/>
            <person name="Brenner S.E."/>
            <person name="Batalov S."/>
            <person name="Forrest A.R."/>
            <person name="Zavolan M."/>
            <person name="Davis M.J."/>
            <person name="Wilming L.G."/>
            <person name="Aidinis V."/>
            <person name="Allen J.E."/>
            <person name="Ambesi-Impiombato A."/>
            <person name="Apweiler R."/>
            <person name="Aturaliya R.N."/>
            <person name="Bailey T.L."/>
            <person name="Bansal M."/>
            <person name="Baxter L."/>
            <person name="Beisel K.W."/>
            <person name="Bersano T."/>
            <person name="Bono H."/>
            <person name="Chalk A.M."/>
            <person name="Chiu K.P."/>
            <person name="Choudhary V."/>
            <person name="Christoffels A."/>
            <person name="Clutterbuck D.R."/>
            <person name="Crowe M.L."/>
            <person name="Dalla E."/>
            <person name="Dalrymple B.P."/>
            <person name="de Bono B."/>
            <person name="Della Gatta G."/>
            <person name="di Bernardo D."/>
            <person name="Down T."/>
            <person name="Engstrom P."/>
            <person name="Fagiolini M."/>
            <person name="Faulkner G."/>
            <person name="Fletcher C.F."/>
            <person name="Fukushima T."/>
            <person name="Furuno M."/>
            <person name="Futaki S."/>
            <person name="Gariboldi M."/>
            <person name="Georgii-Hemming P."/>
            <person name="Gingeras T.R."/>
            <person name="Gojobori T."/>
            <person name="Green R.E."/>
            <person name="Gustincich S."/>
            <person name="Harbers M."/>
            <person name="Hayashi Y."/>
            <person name="Hensch T.K."/>
            <person name="Hirokawa N."/>
            <person name="Hill D."/>
            <person name="Huminiecki L."/>
            <person name="Iacono M."/>
            <person name="Ikeo K."/>
            <person name="Iwama A."/>
            <person name="Ishikawa T."/>
            <person name="Jakt M."/>
            <person name="Kanapin A."/>
            <person name="Katoh M."/>
            <person name="Kawasawa Y."/>
            <person name="Kelso J."/>
            <person name="Kitamura H."/>
            <person name="Kitano H."/>
            <person name="Kollias G."/>
            <person name="Krishnan S.P."/>
            <person name="Kruger A."/>
            <person name="Kummerfeld S.K."/>
            <person name="Kurochkin I.V."/>
            <person name="Lareau L.F."/>
            <person name="Lazarevic D."/>
            <person name="Lipovich L."/>
            <person name="Liu J."/>
            <person name="Liuni S."/>
            <person name="McWilliam S."/>
            <person name="Madan Babu M."/>
            <person name="Madera M."/>
            <person name="Marchionni L."/>
            <person name="Matsuda H."/>
            <person name="Matsuzawa S."/>
            <person name="Miki H."/>
            <person name="Mignone F."/>
            <person name="Miyake S."/>
            <person name="Morris K."/>
            <person name="Mottagui-Tabar S."/>
            <person name="Mulder N."/>
            <person name="Nakano N."/>
            <person name="Nakauchi H."/>
            <person name="Ng P."/>
            <person name="Nilsson R."/>
            <person name="Nishiguchi S."/>
            <person name="Nishikawa S."/>
            <person name="Nori F."/>
            <person name="Ohara O."/>
            <person name="Okazaki Y."/>
            <person name="Orlando V."/>
            <person name="Pang K.C."/>
            <person name="Pavan W.J."/>
            <person name="Pavesi G."/>
            <person name="Pesole G."/>
            <person name="Petrovsky N."/>
            <person name="Piazza S."/>
            <person name="Reed J."/>
            <person name="Reid J.F."/>
            <person name="Ring B.Z."/>
            <person name="Ringwald M."/>
            <person name="Rost B."/>
            <person name="Ruan Y."/>
            <person name="Salzberg S.L."/>
            <person name="Sandelin A."/>
            <person name="Schneider C."/>
            <person name="Schoenbach C."/>
            <person name="Sekiguchi K."/>
            <person name="Semple C.A."/>
            <person name="Seno S."/>
            <person name="Sessa L."/>
            <person name="Sheng Y."/>
            <person name="Shibata Y."/>
            <person name="Shimada H."/>
            <person name="Shimada K."/>
            <person name="Silva D."/>
            <person name="Sinclair B."/>
            <person name="Sperling S."/>
            <person name="Stupka E."/>
            <person name="Sugiura K."/>
            <person name="Sultana R."/>
            <person name="Takenaka Y."/>
            <person name="Taki K."/>
            <person name="Tammoja K."/>
            <person name="Tan S.L."/>
            <person name="Tang S."/>
            <person name="Taylor M.S."/>
            <person name="Tegner J."/>
            <person name="Teichmann S.A."/>
            <person name="Ueda H.R."/>
            <person name="van Nimwegen E."/>
            <person name="Verardo R."/>
            <person name="Wei C.L."/>
            <person name="Yagi K."/>
            <person name="Yamanishi H."/>
            <person name="Zabarovsky E."/>
            <person name="Zhu S."/>
            <person name="Zimmer A."/>
            <person name="Hide W."/>
            <person name="Bult C."/>
            <person name="Grimmond S.M."/>
            <person name="Teasdale R.D."/>
            <person name="Liu E.T."/>
            <person name="Brusic V."/>
            <person name="Quackenbush J."/>
            <person name="Wahlestedt C."/>
            <person name="Mattick J.S."/>
            <person name="Hume D.A."/>
            <person name="Kai C."/>
            <person name="Sasaki D."/>
            <person name="Tomaru Y."/>
            <person name="Fukuda S."/>
            <person name="Kanamori-Katayama M."/>
            <person name="Suzuki M."/>
            <person name="Aoki J."/>
            <person name="Arakawa T."/>
            <person name="Iida J."/>
            <person name="Imamura K."/>
            <person name="Itoh M."/>
            <person name="Kato T."/>
            <person name="Kawaji H."/>
            <person name="Kawagashira N."/>
            <person name="Kawashima T."/>
            <person name="Kojima M."/>
            <person name="Kondo S."/>
            <person name="Konno H."/>
            <person name="Nakano K."/>
            <person name="Ninomiya N."/>
            <person name="Nishio T."/>
            <person name="Okada M."/>
            <person name="Plessy C."/>
            <person name="Shibata K."/>
            <person name="Shiraki T."/>
            <person name="Suzuki S."/>
            <person name="Tagami M."/>
            <person name="Waki K."/>
            <person name="Watahiki A."/>
            <person name="Okamura-Oho Y."/>
            <person name="Suzuki H."/>
            <person name="Kawai J."/>
            <person name="Hayashizaki Y."/>
        </authorList>
    </citation>
    <scope>NUCLEOTIDE SEQUENCE [LARGE SCALE MRNA] (ISOFORM 2)</scope>
</reference>
<reference evidence="8 9" key="2">
    <citation type="journal article" date="2004" name="Genome Res.">
        <title>The status, quality, and expansion of the NIH full-length cDNA project: the Mammalian Gene Collection (MGC).</title>
        <authorList>
            <consortium name="The MGC Project Team"/>
        </authorList>
    </citation>
    <scope>NUCLEOTIDE SEQUENCE [LARGE SCALE MRNA] (ISOFORM 1)</scope>
    <source>
        <strain evidence="9">FVB/N</strain>
        <tissue evidence="9">Liver</tissue>
    </source>
</reference>
<reference key="3">
    <citation type="journal article" date="2010" name="Cell">
        <title>A tissue-specific atlas of mouse protein phosphorylation and expression.</title>
        <authorList>
            <person name="Huttlin E.L."/>
            <person name="Jedrychowski M.P."/>
            <person name="Elias J.E."/>
            <person name="Goswami T."/>
            <person name="Rad R."/>
            <person name="Beausoleil S.A."/>
            <person name="Villen J."/>
            <person name="Haas W."/>
            <person name="Sowa M.E."/>
            <person name="Gygi S.P."/>
        </authorList>
    </citation>
    <scope>IDENTIFICATION BY MASS SPECTROMETRY [LARGE SCALE ANALYSIS]</scope>
    <source>
        <tissue>Kidney</tissue>
        <tissue>Liver</tissue>
        <tissue>Spleen</tissue>
    </source>
</reference>
<reference key="4">
    <citation type="journal article" date="2016" name="Nat. Med.">
        <title>Kynurenine-3-monooxygenase inhibition prevents multiple organ failure in rodent models of acute pancreatitis.</title>
        <authorList>
            <person name="Mole D.J."/>
            <person name="Webster S.P."/>
            <person name="Uings I."/>
            <person name="Zheng X."/>
            <person name="Binnie M."/>
            <person name="Wilson K."/>
            <person name="Hutchinson J.P."/>
            <person name="Mirguet O."/>
            <person name="Walker A."/>
            <person name="Beaufils B."/>
            <person name="Ancellin N."/>
            <person name="Trottet L."/>
            <person name="Beneton V."/>
            <person name="Mowat C.G."/>
            <person name="Wilkinson M."/>
            <person name="Rowland P."/>
            <person name="Haslam C."/>
            <person name="McBride A."/>
            <person name="Homer N.Z."/>
            <person name="Baily J.E."/>
            <person name="Sharp M.G."/>
            <person name="Garden O.J."/>
            <person name="Hughes J."/>
            <person name="Howie S.E."/>
            <person name="Holmes D.S."/>
            <person name="Liddle J."/>
            <person name="Iredale J.P."/>
        </authorList>
    </citation>
    <scope>FUNCTION</scope>
    <scope>DISRUPTION PHENOTYPE</scope>
    <scope>TISSUE SPECIFICITY</scope>
    <scope>CATALYTIC ACTIVITY</scope>
</reference>
<sequence>MASSDTQGKRVAVIGGGLVGALNACFLAKRNFQVDVYEAREDIRVAKSARGRSINLALSYRGRQALKAIGLEDQIVSKGVPMKARMIHSLSGKKSAIPYGNKSQYILSISRENLNKDLLTAVESYANAKVHFGHKLSKCIPEEGVLTVLGPDKVPRDVTCDLVVGCDGAYSTVRAHLMKKPRFDYTQQYIPHGYMELTIPPKNGEYAMEPNCLHIWPRNAYMMIALPNMDKSFTCTLFMPFEEFERLPTRSDVLDFFQKNFPDAIPLMGEQALMRDFFLLPAQPMISVKCSPFHLKSHCVLMGDAAHAIVPFFGQGMNAGFEDCLVFDELMDKFNNNLSMCLPEFSRFRIPDDHAISDLSMYNYIEMRAHVNSRWFLFQKLLDKFLHAIMPSTFIPLYTMVAFTRIRYHEAVLRWHWQKKVINRGLFVLGSLIAIGGTYLLVHHLSLRPLEFLRRPAWMGTTGYWTRSTDISLQVPWSY</sequence>
<feature type="chain" id="PRO_0000229743" description="Kynurenine 3-monooxygenase" evidence="8">
    <location>
        <begin position="1"/>
        <end position="479"/>
    </location>
</feature>
<feature type="transmembrane region" description="Helical" evidence="3">
    <location>
        <begin position="385"/>
        <end position="404"/>
    </location>
</feature>
<feature type="transmembrane region" description="Helical" evidence="3">
    <location>
        <begin position="425"/>
        <end position="445"/>
    </location>
</feature>
<feature type="binding site" evidence="1">
    <location>
        <position position="19"/>
    </location>
    <ligand>
        <name>FAD</name>
        <dbReference type="ChEBI" id="CHEBI:57692"/>
    </ligand>
</feature>
<feature type="binding site" evidence="1">
    <location>
        <begin position="37"/>
        <end position="40"/>
    </location>
    <ligand>
        <name>FAD</name>
        <dbReference type="ChEBI" id="CHEBI:57692"/>
    </ligand>
</feature>
<feature type="binding site" evidence="1">
    <location>
        <position position="57"/>
    </location>
    <ligand>
        <name>FAD</name>
        <dbReference type="ChEBI" id="CHEBI:57692"/>
    </ligand>
</feature>
<feature type="binding site" evidence="2">
    <location>
        <position position="85"/>
    </location>
    <ligand>
        <name>L-kynurenine</name>
        <dbReference type="ChEBI" id="CHEBI:57959"/>
    </ligand>
</feature>
<feature type="binding site" evidence="2">
    <location>
        <position position="99"/>
    </location>
    <ligand>
        <name>L-kynurenine</name>
        <dbReference type="ChEBI" id="CHEBI:57959"/>
    </ligand>
</feature>
<feature type="binding site" evidence="1">
    <location>
        <position position="111"/>
    </location>
    <ligand>
        <name>FAD</name>
        <dbReference type="ChEBI" id="CHEBI:57692"/>
    </ligand>
</feature>
<feature type="binding site" evidence="1">
    <location>
        <position position="136"/>
    </location>
    <ligand>
        <name>FAD</name>
        <dbReference type="ChEBI" id="CHEBI:57692"/>
    </ligand>
</feature>
<feature type="binding site" evidence="1">
    <location>
        <position position="172"/>
    </location>
    <ligand>
        <name>FAD</name>
        <dbReference type="ChEBI" id="CHEBI:57692"/>
    </ligand>
</feature>
<feature type="binding site" evidence="1">
    <location>
        <position position="304"/>
    </location>
    <ligand>
        <name>FAD</name>
        <dbReference type="ChEBI" id="CHEBI:57692"/>
    </ligand>
</feature>
<feature type="binding site" evidence="1">
    <location>
        <begin position="317"/>
        <end position="318"/>
    </location>
    <ligand>
        <name>FAD</name>
        <dbReference type="ChEBI" id="CHEBI:57692"/>
    </ligand>
</feature>
<feature type="binding site" evidence="2">
    <location>
        <position position="363"/>
    </location>
    <ligand>
        <name>L-kynurenine</name>
        <dbReference type="ChEBI" id="CHEBI:57959"/>
    </ligand>
</feature>
<feature type="binding site" evidence="2">
    <location>
        <position position="398"/>
    </location>
    <ligand>
        <name>L-kynurenine</name>
        <dbReference type="ChEBI" id="CHEBI:57959"/>
    </ligand>
</feature>
<feature type="splice variant" id="VSP_051974" description="In isoform 2." evidence="7">
    <location>
        <begin position="367"/>
        <end position="400"/>
    </location>
</feature>
<protein>
    <recommendedName>
        <fullName evidence="3">Kynurenine 3-monooxygenase</fullName>
        <ecNumber evidence="3">1.14.13.9</ecNumber>
    </recommendedName>
    <alternativeName>
        <fullName evidence="3">Kynurenine 3-hydroxylase</fullName>
    </alternativeName>
</protein>
<accession>Q91WN4</accession>
<name>KMO_MOUSE</name>
<comment type="function">
    <text evidence="3 6">Catalyzes the hydroxylation of L-kynurenine (L-Kyn) to form 3-hydroxy-L-kynurenine (L-3OHKyn). Required for synthesis of quinolinic acid, a neurotoxic NMDA receptor antagonist and potential endogenous inhibitor of NMDA receptor signaling in axonal targeting, synaptogenesis and apoptosis during brain development. Quinolinic acid may also affect NMDA receptor signaling in pancreatic beta cells, osteoblasts, myocardial cells, and the gastrointestinal tract.</text>
</comment>
<comment type="catalytic activity">
    <reaction evidence="1 3 6">
        <text>L-kynurenine + NADPH + O2 + H(+) = 3-hydroxy-L-kynurenine + NADP(+) + H2O</text>
        <dbReference type="Rhea" id="RHEA:20545"/>
        <dbReference type="ChEBI" id="CHEBI:15377"/>
        <dbReference type="ChEBI" id="CHEBI:15378"/>
        <dbReference type="ChEBI" id="CHEBI:15379"/>
        <dbReference type="ChEBI" id="CHEBI:57783"/>
        <dbReference type="ChEBI" id="CHEBI:57959"/>
        <dbReference type="ChEBI" id="CHEBI:58125"/>
        <dbReference type="ChEBI" id="CHEBI:58349"/>
        <dbReference type="EC" id="1.14.13.9"/>
    </reaction>
</comment>
<comment type="cofactor">
    <cofactor evidence="1 3">
        <name>FAD</name>
        <dbReference type="ChEBI" id="CHEBI:57692"/>
    </cofactor>
</comment>
<comment type="pathway">
    <text evidence="3">Cofactor biosynthesis; NAD(+) biosynthesis; quinolinate from L-kynurenine: step 1/3.</text>
</comment>
<comment type="subcellular location">
    <subcellularLocation>
        <location evidence="3">Mitochondrion outer membrane</location>
        <topology evidence="3">Multi-pass membrane protein</topology>
    </subcellularLocation>
</comment>
<comment type="alternative products">
    <event type="alternative splicing"/>
    <isoform>
        <id>Q91WN4-1</id>
        <name evidence="4">1</name>
        <sequence type="displayed"/>
    </isoform>
    <isoform>
        <id>Q91WN4-2</id>
        <name evidence="5">2</name>
        <sequence type="described" ref="VSP_051974"/>
    </isoform>
</comment>
<comment type="tissue specificity">
    <text evidence="6">Expressed by organs containing secondary lymphoid tissue, such as the lung, spleen, mesenteric lymph node, thymus and peripheral lymph nodes.</text>
</comment>
<comment type="domain">
    <text evidence="1">Transmembrane domains are required for enzymatic activity.</text>
</comment>
<comment type="disruption phenotype">
    <text evidence="6">Mutants show normal fecundity, fertility and longevity up tp 2 year. They have reduced serum 3-hydroxy-L-kynurenine concentrations. They are protected against extrapancreatic tissue injury to the lung, kidney and liver produced by acute pancreatitis-induced multiple organ dysfunction syndrome.</text>
</comment>
<comment type="similarity">
    <text evidence="3">Belongs to the aromatic-ring hydroxylase family. KMO subfamily.</text>
</comment>
<keyword id="KW-0025">Alternative splicing</keyword>
<keyword id="KW-0274">FAD</keyword>
<keyword id="KW-0285">Flavoprotein</keyword>
<keyword id="KW-0472">Membrane</keyword>
<keyword id="KW-0496">Mitochondrion</keyword>
<keyword id="KW-1000">Mitochondrion outer membrane</keyword>
<keyword id="KW-0503">Monooxygenase</keyword>
<keyword id="KW-0521">NADP</keyword>
<keyword id="KW-0560">Oxidoreductase</keyword>
<keyword id="KW-0662">Pyridine nucleotide biosynthesis</keyword>
<keyword id="KW-1185">Reference proteome</keyword>
<keyword id="KW-0812">Transmembrane</keyword>
<keyword id="KW-1133">Transmembrane helix</keyword>
<dbReference type="EC" id="1.14.13.9" evidence="3"/>
<dbReference type="EMBL" id="AK129011">
    <property type="status" value="NOT_ANNOTATED_CDS"/>
    <property type="molecule type" value="mRNA"/>
</dbReference>
<dbReference type="EMBL" id="BC014683">
    <property type="protein sequence ID" value="AAH14683.1"/>
    <property type="molecule type" value="mRNA"/>
</dbReference>
<dbReference type="CCDS" id="CCDS15548.1">
    <molecule id="Q91WN4-1"/>
</dbReference>
<dbReference type="RefSeq" id="NP_598570.1">
    <molecule id="Q91WN4-1"/>
    <property type="nucleotide sequence ID" value="NM_133809.1"/>
</dbReference>
<dbReference type="SMR" id="Q91WN4"/>
<dbReference type="BioGRID" id="221024">
    <property type="interactions" value="1"/>
</dbReference>
<dbReference type="FunCoup" id="Q91WN4">
    <property type="interactions" value="563"/>
</dbReference>
<dbReference type="STRING" id="10090.ENSMUSP00000038914"/>
<dbReference type="BindingDB" id="Q91WN4"/>
<dbReference type="ChEMBL" id="CHEMBL3407318"/>
<dbReference type="GlyGen" id="Q91WN4">
    <property type="glycosylation" value="1 site, 1 O-linked glycan (1 site)"/>
</dbReference>
<dbReference type="iPTMnet" id="Q91WN4"/>
<dbReference type="PhosphoSitePlus" id="Q91WN4"/>
<dbReference type="SwissPalm" id="Q91WN4"/>
<dbReference type="jPOST" id="Q91WN4"/>
<dbReference type="PaxDb" id="10090-ENSMUSP00000038914"/>
<dbReference type="PeptideAtlas" id="Q91WN4"/>
<dbReference type="ProteomicsDB" id="265014">
    <molecule id="Q91WN4-1"/>
</dbReference>
<dbReference type="ProteomicsDB" id="265015">
    <molecule id="Q91WN4-2"/>
</dbReference>
<dbReference type="Antibodypedia" id="34702">
    <property type="antibodies" value="195 antibodies from 32 providers"/>
</dbReference>
<dbReference type="DNASU" id="98256"/>
<dbReference type="Ensembl" id="ENSMUST00000040250.15">
    <molecule id="Q91WN4-1"/>
    <property type="protein sequence ID" value="ENSMUSP00000038914.9"/>
    <property type="gene ID" value="ENSMUSG00000039783.16"/>
</dbReference>
<dbReference type="Ensembl" id="ENSMUST00000097458.4">
    <molecule id="Q91WN4-2"/>
    <property type="protein sequence ID" value="ENSMUSP00000095067.4"/>
    <property type="gene ID" value="ENSMUSG00000039783.16"/>
</dbReference>
<dbReference type="GeneID" id="98256"/>
<dbReference type="KEGG" id="mmu:98256"/>
<dbReference type="UCSC" id="uc007dto.1">
    <molecule id="Q91WN4-1"/>
    <property type="organism name" value="mouse"/>
</dbReference>
<dbReference type="UCSC" id="uc011wxd.1">
    <molecule id="Q91WN4-2"/>
    <property type="organism name" value="mouse"/>
</dbReference>
<dbReference type="AGR" id="MGI:2138151"/>
<dbReference type="CTD" id="8564"/>
<dbReference type="MGI" id="MGI:2138151">
    <property type="gene designation" value="Kmo"/>
</dbReference>
<dbReference type="VEuPathDB" id="HostDB:ENSMUSG00000039783"/>
<dbReference type="eggNOG" id="KOG2614">
    <property type="taxonomic scope" value="Eukaryota"/>
</dbReference>
<dbReference type="GeneTree" id="ENSGT00390000000747"/>
<dbReference type="HOGENOM" id="CLU_023210_0_0_1"/>
<dbReference type="InParanoid" id="Q91WN4"/>
<dbReference type="OMA" id="REFMFIA"/>
<dbReference type="OrthoDB" id="10053569at2759"/>
<dbReference type="PhylomeDB" id="Q91WN4"/>
<dbReference type="TreeFam" id="TF312990"/>
<dbReference type="BRENDA" id="1.14.13.9">
    <property type="organism ID" value="3474"/>
</dbReference>
<dbReference type="Reactome" id="R-MMU-71240">
    <property type="pathway name" value="Tryptophan catabolism"/>
</dbReference>
<dbReference type="UniPathway" id="UPA00253">
    <property type="reaction ID" value="UER00328"/>
</dbReference>
<dbReference type="BioGRID-ORCS" id="98256">
    <property type="hits" value="3 hits in 77 CRISPR screens"/>
</dbReference>
<dbReference type="ChiTaRS" id="Kmo">
    <property type="organism name" value="mouse"/>
</dbReference>
<dbReference type="PRO" id="PR:Q91WN4"/>
<dbReference type="Proteomes" id="UP000000589">
    <property type="component" value="Chromosome 1"/>
</dbReference>
<dbReference type="RNAct" id="Q91WN4">
    <property type="molecule type" value="protein"/>
</dbReference>
<dbReference type="Bgee" id="ENSMUSG00000039783">
    <property type="expression patterns" value="Expressed in left lobe of liver and 59 other cell types or tissues"/>
</dbReference>
<dbReference type="ExpressionAtlas" id="Q91WN4">
    <property type="expression patterns" value="baseline and differential"/>
</dbReference>
<dbReference type="GO" id="GO:0005615">
    <property type="term" value="C:extracellular space"/>
    <property type="evidence" value="ECO:0007669"/>
    <property type="project" value="Ensembl"/>
</dbReference>
<dbReference type="GO" id="GO:0005743">
    <property type="term" value="C:mitochondrial inner membrane"/>
    <property type="evidence" value="ECO:0007005"/>
    <property type="project" value="MGI"/>
</dbReference>
<dbReference type="GO" id="GO:0005741">
    <property type="term" value="C:mitochondrial outer membrane"/>
    <property type="evidence" value="ECO:0000250"/>
    <property type="project" value="UniProtKB"/>
</dbReference>
<dbReference type="GO" id="GO:0005739">
    <property type="term" value="C:mitochondrion"/>
    <property type="evidence" value="ECO:0007005"/>
    <property type="project" value="MGI"/>
</dbReference>
<dbReference type="GO" id="GO:0071949">
    <property type="term" value="F:FAD binding"/>
    <property type="evidence" value="ECO:0000250"/>
    <property type="project" value="UniProtKB"/>
</dbReference>
<dbReference type="GO" id="GO:0004502">
    <property type="term" value="F:kynurenine 3-monooxygenase activity"/>
    <property type="evidence" value="ECO:0000315"/>
    <property type="project" value="UniProtKB"/>
</dbReference>
<dbReference type="GO" id="GO:0016174">
    <property type="term" value="F:NAD(P)H oxidase H2O2-forming activity"/>
    <property type="evidence" value="ECO:0000250"/>
    <property type="project" value="UniProtKB"/>
</dbReference>
<dbReference type="GO" id="GO:0034354">
    <property type="term" value="P:'de novo' NAD biosynthetic process from L-tryptophan"/>
    <property type="evidence" value="ECO:0007669"/>
    <property type="project" value="UniProtKB-UniRule"/>
</dbReference>
<dbReference type="GO" id="GO:0043420">
    <property type="term" value="P:anthranilate metabolic process"/>
    <property type="evidence" value="ECO:0007669"/>
    <property type="project" value="UniProtKB-UniRule"/>
</dbReference>
<dbReference type="GO" id="GO:0071347">
    <property type="term" value="P:cellular response to interleukin-1"/>
    <property type="evidence" value="ECO:0007669"/>
    <property type="project" value="Ensembl"/>
</dbReference>
<dbReference type="GO" id="GO:0071222">
    <property type="term" value="P:cellular response to lipopolysaccharide"/>
    <property type="evidence" value="ECO:0007669"/>
    <property type="project" value="Ensembl"/>
</dbReference>
<dbReference type="GO" id="GO:0034276">
    <property type="term" value="P:kynurenic acid biosynthetic process"/>
    <property type="evidence" value="ECO:0007669"/>
    <property type="project" value="Ensembl"/>
</dbReference>
<dbReference type="GO" id="GO:0070189">
    <property type="term" value="P:kynurenine metabolic process"/>
    <property type="evidence" value="ECO:0000315"/>
    <property type="project" value="UniProtKB"/>
</dbReference>
<dbReference type="GO" id="GO:0097052">
    <property type="term" value="P:L-kynurenine metabolic process"/>
    <property type="evidence" value="ECO:0007669"/>
    <property type="project" value="Ensembl"/>
</dbReference>
<dbReference type="GO" id="GO:0006569">
    <property type="term" value="P:L-tryptophan catabolic process"/>
    <property type="evidence" value="ECO:0007669"/>
    <property type="project" value="UniProtKB-UniRule"/>
</dbReference>
<dbReference type="GO" id="GO:0019674">
    <property type="term" value="P:NAD metabolic process"/>
    <property type="evidence" value="ECO:0000250"/>
    <property type="project" value="UniProtKB"/>
</dbReference>
<dbReference type="GO" id="GO:1903296">
    <property type="term" value="P:positive regulation of glutamate secretion, neurotransmission"/>
    <property type="evidence" value="ECO:0007669"/>
    <property type="project" value="Ensembl"/>
</dbReference>
<dbReference type="GO" id="GO:0019805">
    <property type="term" value="P:quinolinate biosynthetic process"/>
    <property type="evidence" value="ECO:0007669"/>
    <property type="project" value="UniProtKB-UniRule"/>
</dbReference>
<dbReference type="GO" id="GO:0009651">
    <property type="term" value="P:response to salt stress"/>
    <property type="evidence" value="ECO:0007669"/>
    <property type="project" value="Ensembl"/>
</dbReference>
<dbReference type="FunFam" id="3.50.50.60:FF:000105">
    <property type="entry name" value="Kynurenine 3-monooxygenase"/>
    <property type="match status" value="1"/>
</dbReference>
<dbReference type="Gene3D" id="3.50.50.60">
    <property type="entry name" value="FAD/NAD(P)-binding domain"/>
    <property type="match status" value="1"/>
</dbReference>
<dbReference type="HAMAP" id="MF_01971">
    <property type="entry name" value="Kynurenine_monooxygenase"/>
    <property type="match status" value="1"/>
</dbReference>
<dbReference type="InterPro" id="IPR002938">
    <property type="entry name" value="FAD-bd"/>
</dbReference>
<dbReference type="InterPro" id="IPR036188">
    <property type="entry name" value="FAD/NAD-bd_sf"/>
</dbReference>
<dbReference type="InterPro" id="IPR027545">
    <property type="entry name" value="Kynurenine_monooxygenase"/>
</dbReference>
<dbReference type="PANTHER" id="PTHR46028">
    <property type="entry name" value="KYNURENINE 3-MONOOXYGENASE"/>
    <property type="match status" value="1"/>
</dbReference>
<dbReference type="PANTHER" id="PTHR46028:SF2">
    <property type="entry name" value="KYNURENINE 3-MONOOXYGENASE"/>
    <property type="match status" value="1"/>
</dbReference>
<dbReference type="Pfam" id="PF01494">
    <property type="entry name" value="FAD_binding_3"/>
    <property type="match status" value="1"/>
</dbReference>
<dbReference type="PRINTS" id="PR00420">
    <property type="entry name" value="RNGMNOXGNASE"/>
</dbReference>
<dbReference type="SUPFAM" id="SSF51905">
    <property type="entry name" value="FAD/NAD(P)-binding domain"/>
    <property type="match status" value="1"/>
</dbReference>